<gene>
    <name evidence="1" type="primary">atpG</name>
    <name type="ordered locus">ECIAI1_3917</name>
</gene>
<feature type="chain" id="PRO_1000134145" description="ATP synthase gamma chain">
    <location>
        <begin position="1"/>
        <end position="287"/>
    </location>
</feature>
<protein>
    <recommendedName>
        <fullName evidence="1">ATP synthase gamma chain</fullName>
    </recommendedName>
    <alternativeName>
        <fullName evidence="1">ATP synthase F1 sector gamma subunit</fullName>
    </alternativeName>
    <alternativeName>
        <fullName evidence="1">F-ATPase gamma subunit</fullName>
    </alternativeName>
</protein>
<dbReference type="EMBL" id="CU928160">
    <property type="protein sequence ID" value="CAR00711.1"/>
    <property type="molecule type" value="Genomic_DNA"/>
</dbReference>
<dbReference type="RefSeq" id="WP_000896498.1">
    <property type="nucleotide sequence ID" value="NC_011741.1"/>
</dbReference>
<dbReference type="SMR" id="B7M589"/>
<dbReference type="GeneID" id="93778234"/>
<dbReference type="KEGG" id="ecr:ECIAI1_3917"/>
<dbReference type="HOGENOM" id="CLU_050669_0_1_6"/>
<dbReference type="GO" id="GO:0005886">
    <property type="term" value="C:plasma membrane"/>
    <property type="evidence" value="ECO:0007669"/>
    <property type="project" value="UniProtKB-SubCell"/>
</dbReference>
<dbReference type="GO" id="GO:0045259">
    <property type="term" value="C:proton-transporting ATP synthase complex"/>
    <property type="evidence" value="ECO:0007669"/>
    <property type="project" value="UniProtKB-KW"/>
</dbReference>
<dbReference type="GO" id="GO:0005524">
    <property type="term" value="F:ATP binding"/>
    <property type="evidence" value="ECO:0007669"/>
    <property type="project" value="UniProtKB-UniRule"/>
</dbReference>
<dbReference type="GO" id="GO:0046933">
    <property type="term" value="F:proton-transporting ATP synthase activity, rotational mechanism"/>
    <property type="evidence" value="ECO:0007669"/>
    <property type="project" value="UniProtKB-UniRule"/>
</dbReference>
<dbReference type="GO" id="GO:0042777">
    <property type="term" value="P:proton motive force-driven plasma membrane ATP synthesis"/>
    <property type="evidence" value="ECO:0007669"/>
    <property type="project" value="UniProtKB-UniRule"/>
</dbReference>
<dbReference type="CDD" id="cd12151">
    <property type="entry name" value="F1-ATPase_gamma"/>
    <property type="match status" value="1"/>
</dbReference>
<dbReference type="FunFam" id="1.10.287.80:FF:000005">
    <property type="entry name" value="ATP synthase gamma chain"/>
    <property type="match status" value="2"/>
</dbReference>
<dbReference type="FunFam" id="3.40.1380.10:FF:000001">
    <property type="entry name" value="ATP synthase gamma chain"/>
    <property type="match status" value="1"/>
</dbReference>
<dbReference type="Gene3D" id="3.40.1380.10">
    <property type="match status" value="1"/>
</dbReference>
<dbReference type="Gene3D" id="1.10.287.80">
    <property type="entry name" value="ATP synthase, gamma subunit, helix hairpin domain"/>
    <property type="match status" value="1"/>
</dbReference>
<dbReference type="HAMAP" id="MF_00815">
    <property type="entry name" value="ATP_synth_gamma_bact"/>
    <property type="match status" value="1"/>
</dbReference>
<dbReference type="InterPro" id="IPR035968">
    <property type="entry name" value="ATP_synth_F1_ATPase_gsu"/>
</dbReference>
<dbReference type="InterPro" id="IPR000131">
    <property type="entry name" value="ATP_synth_F1_gsu"/>
</dbReference>
<dbReference type="InterPro" id="IPR023632">
    <property type="entry name" value="ATP_synth_F1_gsu_CS"/>
</dbReference>
<dbReference type="NCBIfam" id="TIGR01146">
    <property type="entry name" value="ATPsyn_F1gamma"/>
    <property type="match status" value="1"/>
</dbReference>
<dbReference type="NCBIfam" id="NF004144">
    <property type="entry name" value="PRK05621.1-1"/>
    <property type="match status" value="1"/>
</dbReference>
<dbReference type="PANTHER" id="PTHR11693">
    <property type="entry name" value="ATP SYNTHASE GAMMA CHAIN"/>
    <property type="match status" value="1"/>
</dbReference>
<dbReference type="PANTHER" id="PTHR11693:SF22">
    <property type="entry name" value="ATP SYNTHASE SUBUNIT GAMMA, MITOCHONDRIAL"/>
    <property type="match status" value="1"/>
</dbReference>
<dbReference type="Pfam" id="PF00231">
    <property type="entry name" value="ATP-synt"/>
    <property type="match status" value="1"/>
</dbReference>
<dbReference type="PRINTS" id="PR00126">
    <property type="entry name" value="ATPASEGAMMA"/>
</dbReference>
<dbReference type="SUPFAM" id="SSF52943">
    <property type="entry name" value="ATP synthase (F1-ATPase), gamma subunit"/>
    <property type="match status" value="1"/>
</dbReference>
<dbReference type="PROSITE" id="PS00153">
    <property type="entry name" value="ATPASE_GAMMA"/>
    <property type="match status" value="1"/>
</dbReference>
<keyword id="KW-0066">ATP synthesis</keyword>
<keyword id="KW-0997">Cell inner membrane</keyword>
<keyword id="KW-1003">Cell membrane</keyword>
<keyword id="KW-0139">CF(1)</keyword>
<keyword id="KW-0375">Hydrogen ion transport</keyword>
<keyword id="KW-0406">Ion transport</keyword>
<keyword id="KW-0472">Membrane</keyword>
<keyword id="KW-0813">Transport</keyword>
<name>ATPG_ECO8A</name>
<organism>
    <name type="scientific">Escherichia coli O8 (strain IAI1)</name>
    <dbReference type="NCBI Taxonomy" id="585034"/>
    <lineage>
        <taxon>Bacteria</taxon>
        <taxon>Pseudomonadati</taxon>
        <taxon>Pseudomonadota</taxon>
        <taxon>Gammaproteobacteria</taxon>
        <taxon>Enterobacterales</taxon>
        <taxon>Enterobacteriaceae</taxon>
        <taxon>Escherichia</taxon>
    </lineage>
</organism>
<accession>B7M589</accession>
<proteinExistence type="inferred from homology"/>
<evidence type="ECO:0000255" key="1">
    <source>
        <dbReference type="HAMAP-Rule" id="MF_00815"/>
    </source>
</evidence>
<comment type="function">
    <text evidence="1">Produces ATP from ADP in the presence of a proton gradient across the membrane. The gamma chain is believed to be important in regulating ATPase activity and the flow of protons through the CF(0) complex.</text>
</comment>
<comment type="subunit">
    <text evidence="1">F-type ATPases have 2 components, CF(1) - the catalytic core - and CF(0) - the membrane proton channel. CF(1) has five subunits: alpha(3), beta(3), gamma(1), delta(1), epsilon(1). CF(0) has three main subunits: a, b and c.</text>
</comment>
<comment type="subcellular location">
    <subcellularLocation>
        <location evidence="1">Cell inner membrane</location>
        <topology evidence="1">Peripheral membrane protein</topology>
    </subcellularLocation>
</comment>
<comment type="similarity">
    <text evidence="1">Belongs to the ATPase gamma chain family.</text>
</comment>
<sequence>MAGAKEIRSKIASVQNTQKITKAMEMVAASKMRKSQDRMAASRPYAETMRKVIGHLAHGNLEYKHPYLEDRDVKRVGYLVVSTDRGLCGGLNINLFKKLLAEMKTWTDKGVQCDLAMIGSKGVSFFNSVGGNVVAQVTGMGDNPSLSELIGPVKVMLQAYDEGRLDKLYIVSNKFINTMSQVPTISQLLPLPASDDDDLKHKSWDYLYEPDPKALLDTLLRRYVESQVYQGVVENLASEQAARMVAMKAATDNGGSLIKELQLVYNKARQASITQELTEIVSGAAAV</sequence>
<reference key="1">
    <citation type="journal article" date="2009" name="PLoS Genet.">
        <title>Organised genome dynamics in the Escherichia coli species results in highly diverse adaptive paths.</title>
        <authorList>
            <person name="Touchon M."/>
            <person name="Hoede C."/>
            <person name="Tenaillon O."/>
            <person name="Barbe V."/>
            <person name="Baeriswyl S."/>
            <person name="Bidet P."/>
            <person name="Bingen E."/>
            <person name="Bonacorsi S."/>
            <person name="Bouchier C."/>
            <person name="Bouvet O."/>
            <person name="Calteau A."/>
            <person name="Chiapello H."/>
            <person name="Clermont O."/>
            <person name="Cruveiller S."/>
            <person name="Danchin A."/>
            <person name="Diard M."/>
            <person name="Dossat C."/>
            <person name="Karoui M.E."/>
            <person name="Frapy E."/>
            <person name="Garry L."/>
            <person name="Ghigo J.M."/>
            <person name="Gilles A.M."/>
            <person name="Johnson J."/>
            <person name="Le Bouguenec C."/>
            <person name="Lescat M."/>
            <person name="Mangenot S."/>
            <person name="Martinez-Jehanne V."/>
            <person name="Matic I."/>
            <person name="Nassif X."/>
            <person name="Oztas S."/>
            <person name="Petit M.A."/>
            <person name="Pichon C."/>
            <person name="Rouy Z."/>
            <person name="Ruf C.S."/>
            <person name="Schneider D."/>
            <person name="Tourret J."/>
            <person name="Vacherie B."/>
            <person name="Vallenet D."/>
            <person name="Medigue C."/>
            <person name="Rocha E.P.C."/>
            <person name="Denamur E."/>
        </authorList>
    </citation>
    <scope>NUCLEOTIDE SEQUENCE [LARGE SCALE GENOMIC DNA]</scope>
    <source>
        <strain>IAI1</strain>
    </source>
</reference>